<accession>Q8CQ85</accession>
<sequence length="182" mass="20673">MSEEVGAKRWYAVHTYSGYENKVKKNLEKRVESMNMTEQIFRVVIPEEEETQVKDGKAKKLVKKTFPGYVLVELIMTDESWYVVRNTPGVTGFVGSAGAGSKPNPLLPEEVRFILKQMGLKEKTIDVELDVGEQVRIQSGPFANQIGEVQEIEADKFKLTVLVDMFGRETPVEVEFDQIEKL</sequence>
<evidence type="ECO:0000255" key="1">
    <source>
        <dbReference type="HAMAP-Rule" id="MF_00948"/>
    </source>
</evidence>
<dbReference type="EMBL" id="AE015929">
    <property type="protein sequence ID" value="AAO03896.1"/>
    <property type="molecule type" value="Genomic_DNA"/>
</dbReference>
<dbReference type="RefSeq" id="NP_763854.1">
    <property type="nucleotide sequence ID" value="NC_004461.1"/>
</dbReference>
<dbReference type="RefSeq" id="WP_001832303.1">
    <property type="nucleotide sequence ID" value="NZ_WBME01000014.1"/>
</dbReference>
<dbReference type="SMR" id="Q8CQ85"/>
<dbReference type="GeneID" id="50019535"/>
<dbReference type="KEGG" id="sep:SE_0299"/>
<dbReference type="PATRIC" id="fig|176280.10.peg.275"/>
<dbReference type="eggNOG" id="COG0250">
    <property type="taxonomic scope" value="Bacteria"/>
</dbReference>
<dbReference type="HOGENOM" id="CLU_067287_1_1_9"/>
<dbReference type="OrthoDB" id="9809075at2"/>
<dbReference type="Proteomes" id="UP000001411">
    <property type="component" value="Chromosome"/>
</dbReference>
<dbReference type="GO" id="GO:0005829">
    <property type="term" value="C:cytosol"/>
    <property type="evidence" value="ECO:0007669"/>
    <property type="project" value="TreeGrafter"/>
</dbReference>
<dbReference type="GO" id="GO:0006353">
    <property type="term" value="P:DNA-templated transcription termination"/>
    <property type="evidence" value="ECO:0007669"/>
    <property type="project" value="UniProtKB-UniRule"/>
</dbReference>
<dbReference type="GO" id="GO:0032784">
    <property type="term" value="P:regulation of DNA-templated transcription elongation"/>
    <property type="evidence" value="ECO:0007669"/>
    <property type="project" value="InterPro"/>
</dbReference>
<dbReference type="GO" id="GO:0031564">
    <property type="term" value="P:transcription antitermination"/>
    <property type="evidence" value="ECO:0007669"/>
    <property type="project" value="UniProtKB-UniRule"/>
</dbReference>
<dbReference type="GO" id="GO:0140673">
    <property type="term" value="P:transcription elongation-coupled chromatin remodeling"/>
    <property type="evidence" value="ECO:0007669"/>
    <property type="project" value="InterPro"/>
</dbReference>
<dbReference type="CDD" id="cd06091">
    <property type="entry name" value="KOW_NusG"/>
    <property type="match status" value="1"/>
</dbReference>
<dbReference type="CDD" id="cd09891">
    <property type="entry name" value="NGN_Bact_1"/>
    <property type="match status" value="1"/>
</dbReference>
<dbReference type="FunFam" id="2.30.30.30:FF:000002">
    <property type="entry name" value="Transcription termination/antitermination factor NusG"/>
    <property type="match status" value="1"/>
</dbReference>
<dbReference type="FunFam" id="3.30.70.940:FF:000002">
    <property type="entry name" value="Transcription termination/antitermination protein NusG"/>
    <property type="match status" value="1"/>
</dbReference>
<dbReference type="Gene3D" id="2.30.30.30">
    <property type="match status" value="1"/>
</dbReference>
<dbReference type="Gene3D" id="3.30.70.940">
    <property type="entry name" value="NusG, N-terminal domain"/>
    <property type="match status" value="1"/>
</dbReference>
<dbReference type="HAMAP" id="MF_00948">
    <property type="entry name" value="NusG"/>
    <property type="match status" value="1"/>
</dbReference>
<dbReference type="InterPro" id="IPR005824">
    <property type="entry name" value="KOW"/>
</dbReference>
<dbReference type="InterPro" id="IPR047050">
    <property type="entry name" value="NGN"/>
</dbReference>
<dbReference type="InterPro" id="IPR006645">
    <property type="entry name" value="NGN-like_dom"/>
</dbReference>
<dbReference type="InterPro" id="IPR036735">
    <property type="entry name" value="NGN_dom_sf"/>
</dbReference>
<dbReference type="InterPro" id="IPR043425">
    <property type="entry name" value="NusG-like"/>
</dbReference>
<dbReference type="InterPro" id="IPR014722">
    <property type="entry name" value="Rib_uL2_dom2"/>
</dbReference>
<dbReference type="InterPro" id="IPR001062">
    <property type="entry name" value="Transcrpt_antiterm_NusG"/>
</dbReference>
<dbReference type="InterPro" id="IPR015869">
    <property type="entry name" value="Transcrpt_antiterm_NusG_bac_CS"/>
</dbReference>
<dbReference type="InterPro" id="IPR008991">
    <property type="entry name" value="Translation_prot_SH3-like_sf"/>
</dbReference>
<dbReference type="NCBIfam" id="TIGR00922">
    <property type="entry name" value="nusG"/>
    <property type="match status" value="1"/>
</dbReference>
<dbReference type="PANTHER" id="PTHR30265">
    <property type="entry name" value="RHO-INTERACTING TRANSCRIPTION TERMINATION FACTOR NUSG"/>
    <property type="match status" value="1"/>
</dbReference>
<dbReference type="PANTHER" id="PTHR30265:SF2">
    <property type="entry name" value="TRANSCRIPTION TERMINATION_ANTITERMINATION PROTEIN NUSG"/>
    <property type="match status" value="1"/>
</dbReference>
<dbReference type="Pfam" id="PF00467">
    <property type="entry name" value="KOW"/>
    <property type="match status" value="1"/>
</dbReference>
<dbReference type="Pfam" id="PF02357">
    <property type="entry name" value="NusG"/>
    <property type="match status" value="1"/>
</dbReference>
<dbReference type="PRINTS" id="PR00338">
    <property type="entry name" value="NUSGTNSCPFCT"/>
</dbReference>
<dbReference type="SMART" id="SM00738">
    <property type="entry name" value="NGN"/>
    <property type="match status" value="1"/>
</dbReference>
<dbReference type="SUPFAM" id="SSF82679">
    <property type="entry name" value="N-utilization substance G protein NusG, N-terminal domain"/>
    <property type="match status" value="1"/>
</dbReference>
<dbReference type="SUPFAM" id="SSF50104">
    <property type="entry name" value="Translation proteins SH3-like domain"/>
    <property type="match status" value="1"/>
</dbReference>
<dbReference type="PROSITE" id="PS01014">
    <property type="entry name" value="NUSG"/>
    <property type="match status" value="1"/>
</dbReference>
<gene>
    <name evidence="1" type="primary">nusG</name>
    <name type="ordered locus">SE_0299</name>
</gene>
<organism>
    <name type="scientific">Staphylococcus epidermidis (strain ATCC 12228 / FDA PCI 1200)</name>
    <dbReference type="NCBI Taxonomy" id="176280"/>
    <lineage>
        <taxon>Bacteria</taxon>
        <taxon>Bacillati</taxon>
        <taxon>Bacillota</taxon>
        <taxon>Bacilli</taxon>
        <taxon>Bacillales</taxon>
        <taxon>Staphylococcaceae</taxon>
        <taxon>Staphylococcus</taxon>
    </lineage>
</organism>
<name>NUSG_STAES</name>
<protein>
    <recommendedName>
        <fullName evidence="1">Transcription termination/antitermination protein NusG</fullName>
    </recommendedName>
</protein>
<keyword id="KW-0804">Transcription</keyword>
<keyword id="KW-0889">Transcription antitermination</keyword>
<keyword id="KW-0805">Transcription regulation</keyword>
<keyword id="KW-0806">Transcription termination</keyword>
<proteinExistence type="inferred from homology"/>
<comment type="function">
    <text evidence="1">Participates in transcription elongation, termination and antitermination.</text>
</comment>
<comment type="similarity">
    <text evidence="1">Belongs to the NusG family.</text>
</comment>
<reference key="1">
    <citation type="journal article" date="2003" name="Mol. Microbiol.">
        <title>Genome-based analysis of virulence genes in a non-biofilm-forming Staphylococcus epidermidis strain (ATCC 12228).</title>
        <authorList>
            <person name="Zhang Y.-Q."/>
            <person name="Ren S.-X."/>
            <person name="Li H.-L."/>
            <person name="Wang Y.-X."/>
            <person name="Fu G."/>
            <person name="Yang J."/>
            <person name="Qin Z.-Q."/>
            <person name="Miao Y.-G."/>
            <person name="Wang W.-Y."/>
            <person name="Chen R.-S."/>
            <person name="Shen Y."/>
            <person name="Chen Z."/>
            <person name="Yuan Z.-H."/>
            <person name="Zhao G.-P."/>
            <person name="Qu D."/>
            <person name="Danchin A."/>
            <person name="Wen Y.-M."/>
        </authorList>
    </citation>
    <scope>NUCLEOTIDE SEQUENCE [LARGE SCALE GENOMIC DNA]</scope>
    <source>
        <strain>ATCC 12228 / FDA PCI 1200</strain>
    </source>
</reference>
<feature type="chain" id="PRO_0000113954" description="Transcription termination/antitermination protein NusG">
    <location>
        <begin position="1"/>
        <end position="182"/>
    </location>
</feature>
<feature type="domain" description="KOW" evidence="1">
    <location>
        <begin position="131"/>
        <end position="163"/>
    </location>
</feature>